<dbReference type="EMBL" id="AE001273">
    <property type="protein sequence ID" value="AAC67717.1"/>
    <property type="molecule type" value="Genomic_DNA"/>
</dbReference>
<dbReference type="PIR" id="B71554">
    <property type="entry name" value="B71554"/>
</dbReference>
<dbReference type="RefSeq" id="NP_219629.1">
    <property type="nucleotide sequence ID" value="NC_000117.1"/>
</dbReference>
<dbReference type="RefSeq" id="WP_009872271.1">
    <property type="nucleotide sequence ID" value="NC_000117.1"/>
</dbReference>
<dbReference type="SMR" id="O84128"/>
<dbReference type="FunCoup" id="O84128">
    <property type="interactions" value="292"/>
</dbReference>
<dbReference type="STRING" id="272561.CT_126"/>
<dbReference type="EnsemblBacteria" id="AAC67717">
    <property type="protein sequence ID" value="AAC67717"/>
    <property type="gene ID" value="CT_126"/>
</dbReference>
<dbReference type="GeneID" id="884121"/>
<dbReference type="KEGG" id="ctr:CT_126"/>
<dbReference type="PATRIC" id="fig|272561.5.peg.138"/>
<dbReference type="HOGENOM" id="CLU_046483_2_1_0"/>
<dbReference type="InParanoid" id="O84128"/>
<dbReference type="OrthoDB" id="9803965at2"/>
<dbReference type="Proteomes" id="UP000000431">
    <property type="component" value="Chromosome"/>
</dbReference>
<dbReference type="GO" id="GO:0022627">
    <property type="term" value="C:cytosolic small ribosomal subunit"/>
    <property type="evidence" value="ECO:0000318"/>
    <property type="project" value="GO_Central"/>
</dbReference>
<dbReference type="GO" id="GO:0003723">
    <property type="term" value="F:RNA binding"/>
    <property type="evidence" value="ECO:0000318"/>
    <property type="project" value="GO_Central"/>
</dbReference>
<dbReference type="GO" id="GO:0003735">
    <property type="term" value="F:structural constituent of ribosome"/>
    <property type="evidence" value="ECO:0000318"/>
    <property type="project" value="GO_Central"/>
</dbReference>
<dbReference type="GO" id="GO:0006412">
    <property type="term" value="P:translation"/>
    <property type="evidence" value="ECO:0007669"/>
    <property type="project" value="UniProtKB-UniRule"/>
</dbReference>
<dbReference type="FunFam" id="3.30.230.10:FF:000141">
    <property type="entry name" value="30S ribosomal protein S9"/>
    <property type="match status" value="1"/>
</dbReference>
<dbReference type="Gene3D" id="3.30.230.10">
    <property type="match status" value="1"/>
</dbReference>
<dbReference type="HAMAP" id="MF_00532_B">
    <property type="entry name" value="Ribosomal_uS9_B"/>
    <property type="match status" value="1"/>
</dbReference>
<dbReference type="InterPro" id="IPR020568">
    <property type="entry name" value="Ribosomal_Su5_D2-typ_SF"/>
</dbReference>
<dbReference type="InterPro" id="IPR000754">
    <property type="entry name" value="Ribosomal_uS9"/>
</dbReference>
<dbReference type="InterPro" id="IPR023035">
    <property type="entry name" value="Ribosomal_uS9_bac/plastid"/>
</dbReference>
<dbReference type="InterPro" id="IPR020574">
    <property type="entry name" value="Ribosomal_uS9_CS"/>
</dbReference>
<dbReference type="InterPro" id="IPR014721">
    <property type="entry name" value="Ribsml_uS5_D2-typ_fold_subgr"/>
</dbReference>
<dbReference type="NCBIfam" id="NF001099">
    <property type="entry name" value="PRK00132.1"/>
    <property type="match status" value="1"/>
</dbReference>
<dbReference type="PANTHER" id="PTHR21569">
    <property type="entry name" value="RIBOSOMAL PROTEIN S9"/>
    <property type="match status" value="1"/>
</dbReference>
<dbReference type="PANTHER" id="PTHR21569:SF1">
    <property type="entry name" value="SMALL RIBOSOMAL SUBUNIT PROTEIN US9M"/>
    <property type="match status" value="1"/>
</dbReference>
<dbReference type="Pfam" id="PF00380">
    <property type="entry name" value="Ribosomal_S9"/>
    <property type="match status" value="1"/>
</dbReference>
<dbReference type="SUPFAM" id="SSF54211">
    <property type="entry name" value="Ribosomal protein S5 domain 2-like"/>
    <property type="match status" value="1"/>
</dbReference>
<dbReference type="PROSITE" id="PS00360">
    <property type="entry name" value="RIBOSOMAL_S9"/>
    <property type="match status" value="1"/>
</dbReference>
<proteinExistence type="inferred from homology"/>
<keyword id="KW-1185">Reference proteome</keyword>
<keyword id="KW-0687">Ribonucleoprotein</keyword>
<keyword id="KW-0689">Ribosomal protein</keyword>
<evidence type="ECO:0000256" key="1">
    <source>
        <dbReference type="SAM" id="MobiDB-lite"/>
    </source>
</evidence>
<evidence type="ECO:0000305" key="2"/>
<protein>
    <recommendedName>
        <fullName evidence="2">Small ribosomal subunit protein uS9</fullName>
    </recommendedName>
    <alternativeName>
        <fullName>30S ribosomal protein S9</fullName>
    </alternativeName>
</protein>
<feature type="chain" id="PRO_0000111345" description="Small ribosomal subunit protein uS9">
    <location>
        <begin position="1"/>
        <end position="129"/>
    </location>
</feature>
<feature type="region of interest" description="Disordered" evidence="1">
    <location>
        <begin position="97"/>
        <end position="129"/>
    </location>
</feature>
<feature type="compositionally biased region" description="Basic residues" evidence="1">
    <location>
        <begin position="110"/>
        <end position="129"/>
    </location>
</feature>
<gene>
    <name type="primary">rpsI</name>
    <name type="synonym">rs9</name>
    <name type="ordered locus">CT_126</name>
</gene>
<reference key="1">
    <citation type="journal article" date="1998" name="Science">
        <title>Genome sequence of an obligate intracellular pathogen of humans: Chlamydia trachomatis.</title>
        <authorList>
            <person name="Stephens R.S."/>
            <person name="Kalman S."/>
            <person name="Lammel C.J."/>
            <person name="Fan J."/>
            <person name="Marathe R."/>
            <person name="Aravind L."/>
            <person name="Mitchell W.P."/>
            <person name="Olinger L."/>
            <person name="Tatusov R.L."/>
            <person name="Zhao Q."/>
            <person name="Koonin E.V."/>
            <person name="Davis R.W."/>
        </authorList>
    </citation>
    <scope>NUCLEOTIDE SEQUENCE [LARGE SCALE GENOMIC DNA]</scope>
    <source>
        <strain>ATCC VR-885 / DSM 19411 / UW-3/Cx</strain>
    </source>
</reference>
<organism>
    <name type="scientific">Chlamydia trachomatis serovar D (strain ATCC VR-885 / DSM 19411 / UW-3/Cx)</name>
    <dbReference type="NCBI Taxonomy" id="272561"/>
    <lineage>
        <taxon>Bacteria</taxon>
        <taxon>Pseudomonadati</taxon>
        <taxon>Chlamydiota</taxon>
        <taxon>Chlamydiia</taxon>
        <taxon>Chlamydiales</taxon>
        <taxon>Chlamydiaceae</taxon>
        <taxon>Chlamydia/Chlamydophila group</taxon>
        <taxon>Chlamydia</taxon>
    </lineage>
</organism>
<comment type="similarity">
    <text evidence="2">Belongs to the universal ribosomal protein uS9 family.</text>
</comment>
<name>RS9_CHLTR</name>
<sequence>MIQESVATGRRKQAVSSVRLRSGNGKIDVNGKTLEQYFPLEVQRATILAPLRMLGDVNSFDLIIRVSGGGVQGQVIATRLGLARAVLQEKEDMKQELKAQGFLTRDPRKKERKKYGRKKARKSFQFSKR</sequence>
<accession>O84128</accession>